<gene>
    <name type="ordered locus">Ppha_1174</name>
</gene>
<accession>B4SGN6</accession>
<feature type="chain" id="PRO_1000114629" description="Nucleoid-associated protein Ppha_1174">
    <location>
        <begin position="1"/>
        <end position="111"/>
    </location>
</feature>
<comment type="function">
    <text evidence="1">Binds to DNA and alters its conformation. May be involved in regulation of gene expression, nucleoid organization and DNA protection.</text>
</comment>
<comment type="subunit">
    <text evidence="1">Homodimer.</text>
</comment>
<comment type="subcellular location">
    <subcellularLocation>
        <location evidence="1">Cytoplasm</location>
        <location evidence="1">Nucleoid</location>
    </subcellularLocation>
</comment>
<comment type="similarity">
    <text evidence="1">Belongs to the YbaB/EbfC family.</text>
</comment>
<reference key="1">
    <citation type="submission" date="2008-06" db="EMBL/GenBank/DDBJ databases">
        <title>Complete sequence of Pelodictyon phaeoclathratiforme BU-1.</title>
        <authorList>
            <consortium name="US DOE Joint Genome Institute"/>
            <person name="Lucas S."/>
            <person name="Copeland A."/>
            <person name="Lapidus A."/>
            <person name="Glavina del Rio T."/>
            <person name="Dalin E."/>
            <person name="Tice H."/>
            <person name="Bruce D."/>
            <person name="Goodwin L."/>
            <person name="Pitluck S."/>
            <person name="Schmutz J."/>
            <person name="Larimer F."/>
            <person name="Land M."/>
            <person name="Hauser L."/>
            <person name="Kyrpides N."/>
            <person name="Mikhailova N."/>
            <person name="Liu Z."/>
            <person name="Li T."/>
            <person name="Zhao F."/>
            <person name="Overmann J."/>
            <person name="Bryant D.A."/>
            <person name="Richardson P."/>
        </authorList>
    </citation>
    <scope>NUCLEOTIDE SEQUENCE [LARGE SCALE GENOMIC DNA]</scope>
    <source>
        <strain>DSM 5477 / BU-1</strain>
    </source>
</reference>
<evidence type="ECO:0000255" key="1">
    <source>
        <dbReference type="HAMAP-Rule" id="MF_00274"/>
    </source>
</evidence>
<proteinExistence type="inferred from homology"/>
<sequence>MAMPNLGDMMKQIQQAGEKMQDVQKQLEKIVAHGEAGGGMVKVSVSGKQKLLSLTIDPDIMDDAEMVQDLVLAAVNNALDESARLAQEEISKVTGGMMNPADILKNLNLGQ</sequence>
<name>Y1174_PELPB</name>
<dbReference type="EMBL" id="CP001110">
    <property type="protein sequence ID" value="ACF43449.1"/>
    <property type="molecule type" value="Genomic_DNA"/>
</dbReference>
<dbReference type="RefSeq" id="WP_012507941.1">
    <property type="nucleotide sequence ID" value="NC_011060.1"/>
</dbReference>
<dbReference type="SMR" id="B4SGN6"/>
<dbReference type="STRING" id="324925.Ppha_1174"/>
<dbReference type="KEGG" id="pph:Ppha_1174"/>
<dbReference type="eggNOG" id="COG0718">
    <property type="taxonomic scope" value="Bacteria"/>
</dbReference>
<dbReference type="HOGENOM" id="CLU_140930_0_1_10"/>
<dbReference type="OrthoDB" id="9808738at2"/>
<dbReference type="Proteomes" id="UP000002724">
    <property type="component" value="Chromosome"/>
</dbReference>
<dbReference type="GO" id="GO:0043590">
    <property type="term" value="C:bacterial nucleoid"/>
    <property type="evidence" value="ECO:0007669"/>
    <property type="project" value="UniProtKB-UniRule"/>
</dbReference>
<dbReference type="GO" id="GO:0005829">
    <property type="term" value="C:cytosol"/>
    <property type="evidence" value="ECO:0007669"/>
    <property type="project" value="TreeGrafter"/>
</dbReference>
<dbReference type="GO" id="GO:0003677">
    <property type="term" value="F:DNA binding"/>
    <property type="evidence" value="ECO:0007669"/>
    <property type="project" value="UniProtKB-UniRule"/>
</dbReference>
<dbReference type="Gene3D" id="3.30.1310.10">
    <property type="entry name" value="Nucleoid-associated protein YbaB-like domain"/>
    <property type="match status" value="1"/>
</dbReference>
<dbReference type="HAMAP" id="MF_00274">
    <property type="entry name" value="DNA_YbaB_EbfC"/>
    <property type="match status" value="1"/>
</dbReference>
<dbReference type="InterPro" id="IPR036894">
    <property type="entry name" value="YbaB-like_sf"/>
</dbReference>
<dbReference type="InterPro" id="IPR004401">
    <property type="entry name" value="YbaB/EbfC"/>
</dbReference>
<dbReference type="NCBIfam" id="TIGR00103">
    <property type="entry name" value="DNA_YbaB_EbfC"/>
    <property type="match status" value="1"/>
</dbReference>
<dbReference type="PANTHER" id="PTHR33449">
    <property type="entry name" value="NUCLEOID-ASSOCIATED PROTEIN YBAB"/>
    <property type="match status" value="1"/>
</dbReference>
<dbReference type="PANTHER" id="PTHR33449:SF1">
    <property type="entry name" value="NUCLEOID-ASSOCIATED PROTEIN YBAB"/>
    <property type="match status" value="1"/>
</dbReference>
<dbReference type="Pfam" id="PF02575">
    <property type="entry name" value="YbaB_DNA_bd"/>
    <property type="match status" value="1"/>
</dbReference>
<dbReference type="PIRSF" id="PIRSF004555">
    <property type="entry name" value="UCP004555"/>
    <property type="match status" value="1"/>
</dbReference>
<dbReference type="SUPFAM" id="SSF82607">
    <property type="entry name" value="YbaB-like"/>
    <property type="match status" value="1"/>
</dbReference>
<organism>
    <name type="scientific">Pelodictyon phaeoclathratiforme (strain DSM 5477 / BU-1)</name>
    <dbReference type="NCBI Taxonomy" id="324925"/>
    <lineage>
        <taxon>Bacteria</taxon>
        <taxon>Pseudomonadati</taxon>
        <taxon>Chlorobiota</taxon>
        <taxon>Chlorobiia</taxon>
        <taxon>Chlorobiales</taxon>
        <taxon>Chlorobiaceae</taxon>
        <taxon>Chlorobium/Pelodictyon group</taxon>
        <taxon>Pelodictyon</taxon>
    </lineage>
</organism>
<keyword id="KW-0963">Cytoplasm</keyword>
<keyword id="KW-0238">DNA-binding</keyword>
<keyword id="KW-1185">Reference proteome</keyword>
<protein>
    <recommendedName>
        <fullName evidence="1">Nucleoid-associated protein Ppha_1174</fullName>
    </recommendedName>
</protein>